<name>LIPZ_MYCTU</name>
<evidence type="ECO:0000303" key="1">
    <source>
    </source>
</evidence>
<evidence type="ECO:0000305" key="2"/>
<dbReference type="EC" id="3.-.-.-" evidence="2"/>
<dbReference type="EMBL" id="AL123456">
    <property type="protein sequence ID" value="CCP44600.1"/>
    <property type="molecule type" value="Genomic_DNA"/>
</dbReference>
<dbReference type="PIR" id="C70722">
    <property type="entry name" value="C70722"/>
</dbReference>
<dbReference type="RefSeq" id="NP_216350.1">
    <property type="nucleotide sequence ID" value="NC_000962.3"/>
</dbReference>
<dbReference type="RefSeq" id="WP_003409255.1">
    <property type="nucleotide sequence ID" value="NZ_NVQJ01000013.1"/>
</dbReference>
<dbReference type="SMR" id="P9WLR1"/>
<dbReference type="FunCoup" id="P9WLR1">
    <property type="interactions" value="6"/>
</dbReference>
<dbReference type="STRING" id="83332.Rv1834"/>
<dbReference type="ESTHER" id="myctu-Y1834">
    <property type="family name" value="MEST-like"/>
</dbReference>
<dbReference type="PaxDb" id="83332-Rv1834"/>
<dbReference type="DNASU" id="888761"/>
<dbReference type="GeneID" id="888761"/>
<dbReference type="KEGG" id="mtu:Rv1834"/>
<dbReference type="KEGG" id="mtv:RVBD_1834"/>
<dbReference type="TubercuList" id="Rv1834"/>
<dbReference type="eggNOG" id="COG0596">
    <property type="taxonomic scope" value="Bacteria"/>
</dbReference>
<dbReference type="InParanoid" id="P9WLR1"/>
<dbReference type="OrthoDB" id="334507at2"/>
<dbReference type="PhylomeDB" id="P9WLR1"/>
<dbReference type="Proteomes" id="UP000001584">
    <property type="component" value="Chromosome"/>
</dbReference>
<dbReference type="GO" id="GO:0016787">
    <property type="term" value="F:hydrolase activity"/>
    <property type="evidence" value="ECO:0007669"/>
    <property type="project" value="UniProtKB-KW"/>
</dbReference>
<dbReference type="Gene3D" id="3.40.50.1820">
    <property type="entry name" value="alpha/beta hydrolase"/>
    <property type="match status" value="1"/>
</dbReference>
<dbReference type="InterPro" id="IPR000073">
    <property type="entry name" value="AB_hydrolase_1"/>
</dbReference>
<dbReference type="InterPro" id="IPR029058">
    <property type="entry name" value="AB_hydrolase_fold"/>
</dbReference>
<dbReference type="InterPro" id="IPR050266">
    <property type="entry name" value="AB_hydrolase_sf"/>
</dbReference>
<dbReference type="InterPro" id="IPR000639">
    <property type="entry name" value="Epox_hydrolase-like"/>
</dbReference>
<dbReference type="PANTHER" id="PTHR43798:SF33">
    <property type="entry name" value="HYDROLASE, PUTATIVE (AFU_ORTHOLOGUE AFUA_2G14860)-RELATED"/>
    <property type="match status" value="1"/>
</dbReference>
<dbReference type="PANTHER" id="PTHR43798">
    <property type="entry name" value="MONOACYLGLYCEROL LIPASE"/>
    <property type="match status" value="1"/>
</dbReference>
<dbReference type="Pfam" id="PF00561">
    <property type="entry name" value="Abhydrolase_1"/>
    <property type="match status" value="1"/>
</dbReference>
<dbReference type="PRINTS" id="PR00412">
    <property type="entry name" value="EPOXHYDRLASE"/>
</dbReference>
<dbReference type="SUPFAM" id="SSF53474">
    <property type="entry name" value="alpha/beta-Hydrolases"/>
    <property type="match status" value="1"/>
</dbReference>
<accession>P9WLR1</accession>
<accession>L0TAJ1</accession>
<accession>Q50599</accession>
<gene>
    <name evidence="1" type="primary">lipZ</name>
    <name type="ordered locus">Rv1834</name>
    <name type="ORF">MTCY1A11.09c</name>
</gene>
<sequence length="288" mass="31676">MTSPSVREWRDGGRWLPTAVGKVFVRSGPGDTPTMLLLHGYPSSSFDFRAVIPHLTGQAWVTMDFLGFGLSDKPRPHRYSLLEQAHLVETVVAHTVTGAVVVLAHDMGTSVTTELLARDLDGRLPFDLRRAVLSNGSVILERASLRPIQKVLRSPLGPVAARLVSRGGFTRGFGRIFSPAHPLSAQEAQAQWELLCYNDGNRIPHLLISYLDERIRHAQRWHGAVRDWPKPLGFVWGLDDPVATTNVLNGLRELRPSAAVVELPGLGHYPQVEAPKAYAEAALSLLVD</sequence>
<comment type="similarity">
    <text evidence="2">Belongs to the AB hydrolase superfamily.</text>
</comment>
<proteinExistence type="inferred from homology"/>
<protein>
    <recommendedName>
        <fullName evidence="1">Putative hydrolase LipZ</fullName>
        <ecNumber evidence="2">3.-.-.-</ecNumber>
    </recommendedName>
</protein>
<organism>
    <name type="scientific">Mycobacterium tuberculosis (strain ATCC 25618 / H37Rv)</name>
    <dbReference type="NCBI Taxonomy" id="83332"/>
    <lineage>
        <taxon>Bacteria</taxon>
        <taxon>Bacillati</taxon>
        <taxon>Actinomycetota</taxon>
        <taxon>Actinomycetes</taxon>
        <taxon>Mycobacteriales</taxon>
        <taxon>Mycobacteriaceae</taxon>
        <taxon>Mycobacterium</taxon>
        <taxon>Mycobacterium tuberculosis complex</taxon>
    </lineage>
</organism>
<keyword id="KW-0378">Hydrolase</keyword>
<keyword id="KW-1185">Reference proteome</keyword>
<feature type="chain" id="PRO_0000103907" description="Putative hydrolase LipZ">
    <location>
        <begin position="1"/>
        <end position="288"/>
    </location>
</feature>
<reference key="1">
    <citation type="journal article" date="1998" name="Nature">
        <title>Deciphering the biology of Mycobacterium tuberculosis from the complete genome sequence.</title>
        <authorList>
            <person name="Cole S.T."/>
            <person name="Brosch R."/>
            <person name="Parkhill J."/>
            <person name="Garnier T."/>
            <person name="Churcher C.M."/>
            <person name="Harris D.E."/>
            <person name="Gordon S.V."/>
            <person name="Eiglmeier K."/>
            <person name="Gas S."/>
            <person name="Barry C.E. III"/>
            <person name="Tekaia F."/>
            <person name="Badcock K."/>
            <person name="Basham D."/>
            <person name="Brown D."/>
            <person name="Chillingworth T."/>
            <person name="Connor R."/>
            <person name="Davies R.M."/>
            <person name="Devlin K."/>
            <person name="Feltwell T."/>
            <person name="Gentles S."/>
            <person name="Hamlin N."/>
            <person name="Holroyd S."/>
            <person name="Hornsby T."/>
            <person name="Jagels K."/>
            <person name="Krogh A."/>
            <person name="McLean J."/>
            <person name="Moule S."/>
            <person name="Murphy L.D."/>
            <person name="Oliver S."/>
            <person name="Osborne J."/>
            <person name="Quail M.A."/>
            <person name="Rajandream M.A."/>
            <person name="Rogers J."/>
            <person name="Rutter S."/>
            <person name="Seeger K."/>
            <person name="Skelton S."/>
            <person name="Squares S."/>
            <person name="Squares R."/>
            <person name="Sulston J.E."/>
            <person name="Taylor K."/>
            <person name="Whitehead S."/>
            <person name="Barrell B.G."/>
        </authorList>
    </citation>
    <scope>NUCLEOTIDE SEQUENCE [LARGE SCALE GENOMIC DNA]</scope>
    <source>
        <strain>ATCC 25618 / H37Rv</strain>
    </source>
</reference>
<reference key="2">
    <citation type="journal article" date="2006" name="J. Biol. Chem.">
        <title>A novel lipase belonging to the hormone-sensitive lipase family induced under starvation to utilize stored triacylglycerol in Mycobacterium tuberculosis.</title>
        <authorList>
            <person name="Deb C."/>
            <person name="Daniel J."/>
            <person name="Sirakova T.D."/>
            <person name="Abomoelak B."/>
            <person name="Dubey V.S."/>
            <person name="Kolattukudy P.E."/>
        </authorList>
    </citation>
    <scope>NOMENCLATURE</scope>
    <source>
        <strain>ATCC 27294 / TMC 102 / H37Rv</strain>
    </source>
</reference>